<organism>
    <name type="scientific">Schizosaccharomyces pombe (strain 972 / ATCC 24843)</name>
    <name type="common">Fission yeast</name>
    <dbReference type="NCBI Taxonomy" id="284812"/>
    <lineage>
        <taxon>Eukaryota</taxon>
        <taxon>Fungi</taxon>
        <taxon>Dikarya</taxon>
        <taxon>Ascomycota</taxon>
        <taxon>Taphrinomycotina</taxon>
        <taxon>Schizosaccharomycetes</taxon>
        <taxon>Schizosaccharomycetales</taxon>
        <taxon>Schizosaccharomycetaceae</taxon>
        <taxon>Schizosaccharomyces</taxon>
    </lineage>
</organism>
<feature type="chain" id="PRO_0000310355" description="Uncharacterized J domain-containing protein C63.13">
    <location>
        <begin position="1"/>
        <end position="208"/>
    </location>
</feature>
<feature type="transmembrane region" description="Helical" evidence="1">
    <location>
        <begin position="127"/>
        <end position="147"/>
    </location>
</feature>
<feature type="domain" description="J" evidence="2">
    <location>
        <begin position="4"/>
        <end position="71"/>
    </location>
</feature>
<feature type="region of interest" description="Disordered" evidence="3">
    <location>
        <begin position="67"/>
        <end position="100"/>
    </location>
</feature>
<feature type="compositionally biased region" description="Polar residues" evidence="3">
    <location>
        <begin position="72"/>
        <end position="87"/>
    </location>
</feature>
<feature type="compositionally biased region" description="Low complexity" evidence="3">
    <location>
        <begin position="88"/>
        <end position="100"/>
    </location>
</feature>
<name>YCJD_SCHPO</name>
<accession>Q9Y7T9</accession>
<reference key="1">
    <citation type="journal article" date="2002" name="Nature">
        <title>The genome sequence of Schizosaccharomyces pombe.</title>
        <authorList>
            <person name="Wood V."/>
            <person name="Gwilliam R."/>
            <person name="Rajandream M.A."/>
            <person name="Lyne M.H."/>
            <person name="Lyne R."/>
            <person name="Stewart A."/>
            <person name="Sgouros J.G."/>
            <person name="Peat N."/>
            <person name="Hayles J."/>
            <person name="Baker S.G."/>
            <person name="Basham D."/>
            <person name="Bowman S."/>
            <person name="Brooks K."/>
            <person name="Brown D."/>
            <person name="Brown S."/>
            <person name="Chillingworth T."/>
            <person name="Churcher C.M."/>
            <person name="Collins M."/>
            <person name="Connor R."/>
            <person name="Cronin A."/>
            <person name="Davis P."/>
            <person name="Feltwell T."/>
            <person name="Fraser A."/>
            <person name="Gentles S."/>
            <person name="Goble A."/>
            <person name="Hamlin N."/>
            <person name="Harris D.E."/>
            <person name="Hidalgo J."/>
            <person name="Hodgson G."/>
            <person name="Holroyd S."/>
            <person name="Hornsby T."/>
            <person name="Howarth S."/>
            <person name="Huckle E.J."/>
            <person name="Hunt S."/>
            <person name="Jagels K."/>
            <person name="James K.D."/>
            <person name="Jones L."/>
            <person name="Jones M."/>
            <person name="Leather S."/>
            <person name="McDonald S."/>
            <person name="McLean J."/>
            <person name="Mooney P."/>
            <person name="Moule S."/>
            <person name="Mungall K.L."/>
            <person name="Murphy L.D."/>
            <person name="Niblett D."/>
            <person name="Odell C."/>
            <person name="Oliver K."/>
            <person name="O'Neil S."/>
            <person name="Pearson D."/>
            <person name="Quail M.A."/>
            <person name="Rabbinowitsch E."/>
            <person name="Rutherford K.M."/>
            <person name="Rutter S."/>
            <person name="Saunders D."/>
            <person name="Seeger K."/>
            <person name="Sharp S."/>
            <person name="Skelton J."/>
            <person name="Simmonds M.N."/>
            <person name="Squares R."/>
            <person name="Squares S."/>
            <person name="Stevens K."/>
            <person name="Taylor K."/>
            <person name="Taylor R.G."/>
            <person name="Tivey A."/>
            <person name="Walsh S.V."/>
            <person name="Warren T."/>
            <person name="Whitehead S."/>
            <person name="Woodward J.R."/>
            <person name="Volckaert G."/>
            <person name="Aert R."/>
            <person name="Robben J."/>
            <person name="Grymonprez B."/>
            <person name="Weltjens I."/>
            <person name="Vanstreels E."/>
            <person name="Rieger M."/>
            <person name="Schaefer M."/>
            <person name="Mueller-Auer S."/>
            <person name="Gabel C."/>
            <person name="Fuchs M."/>
            <person name="Duesterhoeft A."/>
            <person name="Fritzc C."/>
            <person name="Holzer E."/>
            <person name="Moestl D."/>
            <person name="Hilbert H."/>
            <person name="Borzym K."/>
            <person name="Langer I."/>
            <person name="Beck A."/>
            <person name="Lehrach H."/>
            <person name="Reinhardt R."/>
            <person name="Pohl T.M."/>
            <person name="Eger P."/>
            <person name="Zimmermann W."/>
            <person name="Wedler H."/>
            <person name="Wambutt R."/>
            <person name="Purnelle B."/>
            <person name="Goffeau A."/>
            <person name="Cadieu E."/>
            <person name="Dreano S."/>
            <person name="Gloux S."/>
            <person name="Lelaure V."/>
            <person name="Mottier S."/>
            <person name="Galibert F."/>
            <person name="Aves S.J."/>
            <person name="Xiang Z."/>
            <person name="Hunt C."/>
            <person name="Moore K."/>
            <person name="Hurst S.M."/>
            <person name="Lucas M."/>
            <person name="Rochet M."/>
            <person name="Gaillardin C."/>
            <person name="Tallada V.A."/>
            <person name="Garzon A."/>
            <person name="Thode G."/>
            <person name="Daga R.R."/>
            <person name="Cruzado L."/>
            <person name="Jimenez J."/>
            <person name="Sanchez M."/>
            <person name="del Rey F."/>
            <person name="Benito J."/>
            <person name="Dominguez A."/>
            <person name="Revuelta J.L."/>
            <person name="Moreno S."/>
            <person name="Armstrong J."/>
            <person name="Forsburg S.L."/>
            <person name="Cerutti L."/>
            <person name="Lowe T."/>
            <person name="McCombie W.R."/>
            <person name="Paulsen I."/>
            <person name="Potashkin J."/>
            <person name="Shpakovski G.V."/>
            <person name="Ussery D."/>
            <person name="Barrell B.G."/>
            <person name="Nurse P."/>
        </authorList>
    </citation>
    <scope>NUCLEOTIDE SEQUENCE [LARGE SCALE GENOMIC DNA]</scope>
    <source>
        <strain>972 / ATCC 24843</strain>
    </source>
</reference>
<reference key="2">
    <citation type="journal article" date="2006" name="Nat. Biotechnol.">
        <title>ORFeome cloning and global analysis of protein localization in the fission yeast Schizosaccharomyces pombe.</title>
        <authorList>
            <person name="Matsuyama A."/>
            <person name="Arai R."/>
            <person name="Yashiroda Y."/>
            <person name="Shirai A."/>
            <person name="Kamata A."/>
            <person name="Sekido S."/>
            <person name="Kobayashi Y."/>
            <person name="Hashimoto A."/>
            <person name="Hamamoto M."/>
            <person name="Hiraoka Y."/>
            <person name="Horinouchi S."/>
            <person name="Yoshida M."/>
        </authorList>
    </citation>
    <scope>SUBCELLULAR LOCATION [LARGE SCALE ANALYSIS]</scope>
</reference>
<evidence type="ECO:0000255" key="1"/>
<evidence type="ECO:0000255" key="2">
    <source>
        <dbReference type="PROSITE-ProRule" id="PRU00286"/>
    </source>
</evidence>
<evidence type="ECO:0000256" key="3">
    <source>
        <dbReference type="SAM" id="MobiDB-lite"/>
    </source>
</evidence>
<evidence type="ECO:0000269" key="4">
    <source>
    </source>
</evidence>
<evidence type="ECO:0000305" key="5"/>
<dbReference type="EMBL" id="CU329672">
    <property type="protein sequence ID" value="CAB40017.1"/>
    <property type="molecule type" value="Genomic_DNA"/>
</dbReference>
<dbReference type="PIR" id="T41514">
    <property type="entry name" value="T41514"/>
</dbReference>
<dbReference type="RefSeq" id="NP_587986.1">
    <property type="nucleotide sequence ID" value="NM_001022977.2"/>
</dbReference>
<dbReference type="SMR" id="Q9Y7T9"/>
<dbReference type="BioGRID" id="276014">
    <property type="interactions" value="9"/>
</dbReference>
<dbReference type="FunCoup" id="Q9Y7T9">
    <property type="interactions" value="253"/>
</dbReference>
<dbReference type="STRING" id="284812.Q9Y7T9"/>
<dbReference type="iPTMnet" id="Q9Y7T9"/>
<dbReference type="PaxDb" id="4896-SPCC63.13.1"/>
<dbReference type="EnsemblFungi" id="SPCC63.13.1">
    <property type="protein sequence ID" value="SPCC63.13.1:pep"/>
    <property type="gene ID" value="SPCC63.13"/>
</dbReference>
<dbReference type="KEGG" id="spo:2539451"/>
<dbReference type="PomBase" id="SPCC63.13"/>
<dbReference type="VEuPathDB" id="FungiDB:SPCC63.13"/>
<dbReference type="eggNOG" id="KOG0714">
    <property type="taxonomic scope" value="Eukaryota"/>
</dbReference>
<dbReference type="HOGENOM" id="CLU_073129_3_0_1"/>
<dbReference type="InParanoid" id="Q9Y7T9"/>
<dbReference type="OMA" id="SVYTAFQ"/>
<dbReference type="PhylomeDB" id="Q9Y7T9"/>
<dbReference type="Reactome" id="R-SPO-3371453">
    <property type="pathway name" value="Regulation of HSF1-mediated heat shock response"/>
</dbReference>
<dbReference type="PRO" id="PR:Q9Y7T9"/>
<dbReference type="Proteomes" id="UP000002485">
    <property type="component" value="Chromosome III"/>
</dbReference>
<dbReference type="GO" id="GO:0005737">
    <property type="term" value="C:cytoplasm"/>
    <property type="evidence" value="ECO:0000318"/>
    <property type="project" value="GO_Central"/>
</dbReference>
<dbReference type="GO" id="GO:0005783">
    <property type="term" value="C:endoplasmic reticulum"/>
    <property type="evidence" value="ECO:0007005"/>
    <property type="project" value="PomBase"/>
</dbReference>
<dbReference type="GO" id="GO:0005789">
    <property type="term" value="C:endoplasmic reticulum membrane"/>
    <property type="evidence" value="ECO:0007669"/>
    <property type="project" value="UniProtKB-SubCell"/>
</dbReference>
<dbReference type="GO" id="GO:0005634">
    <property type="term" value="C:nucleus"/>
    <property type="evidence" value="ECO:0000318"/>
    <property type="project" value="GO_Central"/>
</dbReference>
<dbReference type="GO" id="GO:0030544">
    <property type="term" value="F:Hsp70 protein binding"/>
    <property type="evidence" value="ECO:0000255"/>
    <property type="project" value="PomBase"/>
</dbReference>
<dbReference type="GO" id="GO:0044183">
    <property type="term" value="F:protein folding chaperone"/>
    <property type="evidence" value="ECO:0000318"/>
    <property type="project" value="GO_Central"/>
</dbReference>
<dbReference type="GO" id="GO:0051087">
    <property type="term" value="F:protein-folding chaperone binding"/>
    <property type="evidence" value="ECO:0000318"/>
    <property type="project" value="GO_Central"/>
</dbReference>
<dbReference type="GO" id="GO:0051082">
    <property type="term" value="F:unfolded protein binding"/>
    <property type="evidence" value="ECO:0000318"/>
    <property type="project" value="GO_Central"/>
</dbReference>
<dbReference type="GO" id="GO:0061077">
    <property type="term" value="P:chaperone-mediated protein folding"/>
    <property type="evidence" value="ECO:0000266"/>
    <property type="project" value="PomBase"/>
</dbReference>
<dbReference type="CDD" id="cd06257">
    <property type="entry name" value="DnaJ"/>
    <property type="match status" value="1"/>
</dbReference>
<dbReference type="Gene3D" id="1.10.287.110">
    <property type="entry name" value="DnaJ domain"/>
    <property type="match status" value="1"/>
</dbReference>
<dbReference type="InterPro" id="IPR001623">
    <property type="entry name" value="DnaJ_domain"/>
</dbReference>
<dbReference type="InterPro" id="IPR036869">
    <property type="entry name" value="J_dom_sf"/>
</dbReference>
<dbReference type="PANTHER" id="PTHR43948:SF21">
    <property type="entry name" value="DNAJ DOMAIN-CONTAINING PROTEIN"/>
    <property type="match status" value="1"/>
</dbReference>
<dbReference type="PANTHER" id="PTHR43948">
    <property type="entry name" value="DNAJ HOMOLOG SUBFAMILY B"/>
    <property type="match status" value="1"/>
</dbReference>
<dbReference type="Pfam" id="PF00226">
    <property type="entry name" value="DnaJ"/>
    <property type="match status" value="1"/>
</dbReference>
<dbReference type="PRINTS" id="PR00625">
    <property type="entry name" value="JDOMAIN"/>
</dbReference>
<dbReference type="SMART" id="SM00271">
    <property type="entry name" value="DnaJ"/>
    <property type="match status" value="1"/>
</dbReference>
<dbReference type="SUPFAM" id="SSF46565">
    <property type="entry name" value="Chaperone J-domain"/>
    <property type="match status" value="1"/>
</dbReference>
<dbReference type="PROSITE" id="PS50076">
    <property type="entry name" value="DNAJ_2"/>
    <property type="match status" value="1"/>
</dbReference>
<gene>
    <name type="ORF">SPCC63.13</name>
</gene>
<proteinExistence type="inferred from homology"/>
<comment type="subcellular location">
    <subcellularLocation>
        <location evidence="4">Endoplasmic reticulum membrane</location>
        <topology evidence="4">Single-pass membrane protein</topology>
    </subcellularLocation>
</comment>
<comment type="similarity">
    <text evidence="5">Belongs to the DnaJ family.</text>
</comment>
<protein>
    <recommendedName>
        <fullName>Uncharacterized J domain-containing protein C63.13</fullName>
    </recommendedName>
</protein>
<keyword id="KW-0143">Chaperone</keyword>
<keyword id="KW-0256">Endoplasmic reticulum</keyword>
<keyword id="KW-0472">Membrane</keyword>
<keyword id="KW-1185">Reference proteome</keyword>
<keyword id="KW-0812">Transmembrane</keyword>
<keyword id="KW-1133">Transmembrane helix</keyword>
<sequence length="208" mass="23009">MFKDYYAILNITPKASAEEIKYAYKKAALETHPDRVSPSARARATEQFQLVNEAYYVLSDNSRRAQYDRESASSSAKPRQSFFSRTNPQPQSQSQQGGPSFGFRQSFSDSQFEQVFNEMMNETSTRGIANAFWTIVGTLAGAALGFITFDVPGVLVGSAAGAKLGRIRDTHGKSAYSVFQDMPAVEKARILTQFLSHLLNSSKQFTSS</sequence>